<organism>
    <name type="scientific">Escherichia coli (strain SE11)</name>
    <dbReference type="NCBI Taxonomy" id="409438"/>
    <lineage>
        <taxon>Bacteria</taxon>
        <taxon>Pseudomonadati</taxon>
        <taxon>Pseudomonadota</taxon>
        <taxon>Gammaproteobacteria</taxon>
        <taxon>Enterobacterales</taxon>
        <taxon>Enterobacteriaceae</taxon>
        <taxon>Escherichia</taxon>
    </lineage>
</organism>
<comment type="function">
    <text evidence="1">Involved in the biosynthesis of the osmoprotectant glycine betaine. Catalyzes the irreversible oxidation of betaine aldehyde to the corresponding acid.</text>
</comment>
<comment type="catalytic activity">
    <reaction evidence="1">
        <text>betaine aldehyde + NAD(+) + H2O = glycine betaine + NADH + 2 H(+)</text>
        <dbReference type="Rhea" id="RHEA:15305"/>
        <dbReference type="ChEBI" id="CHEBI:15377"/>
        <dbReference type="ChEBI" id="CHEBI:15378"/>
        <dbReference type="ChEBI" id="CHEBI:15710"/>
        <dbReference type="ChEBI" id="CHEBI:17750"/>
        <dbReference type="ChEBI" id="CHEBI:57540"/>
        <dbReference type="ChEBI" id="CHEBI:57945"/>
        <dbReference type="EC" id="1.2.1.8"/>
    </reaction>
    <physiologicalReaction direction="left-to-right" evidence="1">
        <dbReference type="Rhea" id="RHEA:15306"/>
    </physiologicalReaction>
</comment>
<comment type="cofactor">
    <cofactor evidence="1">
        <name>K(+)</name>
        <dbReference type="ChEBI" id="CHEBI:29103"/>
    </cofactor>
    <text evidence="1">Binds 2 potassium ions per subunit.</text>
</comment>
<comment type="pathway">
    <text evidence="1">Amine and polyamine biosynthesis; betaine biosynthesis via choline pathway; betaine from betaine aldehyde: step 1/1.</text>
</comment>
<comment type="subunit">
    <text evidence="1">Dimer of dimers.</text>
</comment>
<comment type="similarity">
    <text evidence="1">Belongs to the aldehyde dehydrogenase family.</text>
</comment>
<name>BETB_ECOSE</name>
<proteinExistence type="inferred from homology"/>
<feature type="chain" id="PRO_1000133952" description="Betaine aldehyde dehydrogenase">
    <location>
        <begin position="1"/>
        <end position="490"/>
    </location>
</feature>
<feature type="active site" description="Charge relay system" evidence="1">
    <location>
        <position position="162"/>
    </location>
</feature>
<feature type="active site" description="Proton acceptor" evidence="1">
    <location>
        <position position="252"/>
    </location>
</feature>
<feature type="active site" description="Nucleophile" evidence="1">
    <location>
        <position position="286"/>
    </location>
</feature>
<feature type="active site" description="Charge relay system" evidence="1">
    <location>
        <position position="464"/>
    </location>
</feature>
<feature type="binding site" evidence="1">
    <location>
        <position position="26"/>
    </location>
    <ligand>
        <name>K(+)</name>
        <dbReference type="ChEBI" id="CHEBI:29103"/>
        <label>1</label>
    </ligand>
</feature>
<feature type="binding site" evidence="1">
    <location>
        <position position="27"/>
    </location>
    <ligand>
        <name>K(+)</name>
        <dbReference type="ChEBI" id="CHEBI:29103"/>
        <label>1</label>
    </ligand>
</feature>
<feature type="binding site" evidence="1">
    <location>
        <position position="93"/>
    </location>
    <ligand>
        <name>K(+)</name>
        <dbReference type="ChEBI" id="CHEBI:29103"/>
        <label>1</label>
    </ligand>
</feature>
<feature type="binding site" evidence="1">
    <location>
        <begin position="150"/>
        <end position="152"/>
    </location>
    <ligand>
        <name>NAD(+)</name>
        <dbReference type="ChEBI" id="CHEBI:57540"/>
    </ligand>
</feature>
<feature type="binding site" evidence="1">
    <location>
        <begin position="176"/>
        <end position="179"/>
    </location>
    <ligand>
        <name>NAD(+)</name>
        <dbReference type="ChEBI" id="CHEBI:57540"/>
    </ligand>
</feature>
<feature type="binding site" evidence="1">
    <location>
        <position position="180"/>
    </location>
    <ligand>
        <name>K(+)</name>
        <dbReference type="ChEBI" id="CHEBI:29103"/>
        <label>1</label>
    </ligand>
</feature>
<feature type="binding site" evidence="1">
    <location>
        <begin position="230"/>
        <end position="233"/>
    </location>
    <ligand>
        <name>NAD(+)</name>
        <dbReference type="ChEBI" id="CHEBI:57540"/>
    </ligand>
</feature>
<feature type="binding site" evidence="1">
    <location>
        <position position="246"/>
    </location>
    <ligand>
        <name>K(+)</name>
        <dbReference type="ChEBI" id="CHEBI:29103"/>
        <label>2</label>
    </ligand>
</feature>
<feature type="binding site" evidence="1">
    <location>
        <position position="254"/>
    </location>
    <ligand>
        <name>NAD(+)</name>
        <dbReference type="ChEBI" id="CHEBI:57540"/>
    </ligand>
</feature>
<feature type="binding site" description="covalent" evidence="1">
    <location>
        <position position="286"/>
    </location>
    <ligand>
        <name>NAD(+)</name>
        <dbReference type="ChEBI" id="CHEBI:57540"/>
    </ligand>
</feature>
<feature type="binding site" evidence="1">
    <location>
        <position position="387"/>
    </location>
    <ligand>
        <name>NAD(+)</name>
        <dbReference type="ChEBI" id="CHEBI:57540"/>
    </ligand>
</feature>
<feature type="binding site" evidence="1">
    <location>
        <position position="457"/>
    </location>
    <ligand>
        <name>K(+)</name>
        <dbReference type="ChEBI" id="CHEBI:29103"/>
        <label>2</label>
    </ligand>
</feature>
<feature type="binding site" evidence="1">
    <location>
        <position position="460"/>
    </location>
    <ligand>
        <name>K(+)</name>
        <dbReference type="ChEBI" id="CHEBI:29103"/>
        <label>2</label>
    </ligand>
</feature>
<feature type="site" description="Seems to be a necessary countercharge to the potassium cations" evidence="1">
    <location>
        <position position="248"/>
    </location>
</feature>
<feature type="modified residue" description="Cysteine sulfenic acid (-SOH)" evidence="1">
    <location>
        <position position="286"/>
    </location>
</feature>
<accession>B6I075</accession>
<keyword id="KW-0479">Metal-binding</keyword>
<keyword id="KW-0520">NAD</keyword>
<keyword id="KW-0521">NADP</keyword>
<keyword id="KW-0558">Oxidation</keyword>
<keyword id="KW-0560">Oxidoreductase</keyword>
<keyword id="KW-0630">Potassium</keyword>
<gene>
    <name evidence="1" type="primary">betB</name>
    <name type="ordered locus">ECSE_0333</name>
</gene>
<reference key="1">
    <citation type="journal article" date="2008" name="DNA Res.">
        <title>Complete genome sequence and comparative analysis of the wild-type commensal Escherichia coli strain SE11 isolated from a healthy adult.</title>
        <authorList>
            <person name="Oshima K."/>
            <person name="Toh H."/>
            <person name="Ogura Y."/>
            <person name="Sasamoto H."/>
            <person name="Morita H."/>
            <person name="Park S.-H."/>
            <person name="Ooka T."/>
            <person name="Iyoda S."/>
            <person name="Taylor T.D."/>
            <person name="Hayashi T."/>
            <person name="Itoh K."/>
            <person name="Hattori M."/>
        </authorList>
    </citation>
    <scope>NUCLEOTIDE SEQUENCE [LARGE SCALE GENOMIC DNA]</scope>
    <source>
        <strain>SE11</strain>
    </source>
</reference>
<evidence type="ECO:0000255" key="1">
    <source>
        <dbReference type="HAMAP-Rule" id="MF_00804"/>
    </source>
</evidence>
<sequence>MSRMAEQQLYIHGGYTSATSGRTFETINPANGNVLATVQAAGREDVDRAVKSAQQGQKIWAAMTAMERSRILRRAVDILRERNDELAKLETLDTGKAYSETSTVDIVTGADVLEYYAGLIPALEGSQIPLRETLFVYTRREPLGVVAGIGAWNYPIQIALWKSAPALAAGNAMIFKPSEVTPLTALKLAEIYSEAGLPDGVFNVLPGVGAETGQYLTEHPGIAKVSFTGGVASGKKVMANSAASSLKEVTMELGGKSPLIVFDDADLDLAADIAMMANFFSSGQVCTNGTRVFVPAKCKAAFEQKILARVERIRAGDVFDPQTNFGPLVSFPHRDNVLRYIAKGKEEGARVLCGGDVLKGDGFDNGAWVAPTVFTDCRDEMTIVREEIFGPVMSLLTYESEDEVIRRANDTDYGLAAGIVTADLNRAHRVIHQLEAGICWINTWGESPAEMPVGGYKHSGIGRENGVMTLQSYTQVKSIQVEMAKFQSIF</sequence>
<protein>
    <recommendedName>
        <fullName evidence="1">Betaine aldehyde dehydrogenase</fullName>
        <shortName evidence="1">BADH</shortName>
        <ecNumber evidence="1">1.2.1.8</ecNumber>
    </recommendedName>
</protein>
<dbReference type="EC" id="1.2.1.8" evidence="1"/>
<dbReference type="EMBL" id="AP009240">
    <property type="protein sequence ID" value="BAG75857.1"/>
    <property type="molecule type" value="Genomic_DNA"/>
</dbReference>
<dbReference type="RefSeq" id="WP_000089063.1">
    <property type="nucleotide sequence ID" value="NC_011415.1"/>
</dbReference>
<dbReference type="SMR" id="B6I075"/>
<dbReference type="KEGG" id="ecy:ECSE_0333"/>
<dbReference type="HOGENOM" id="CLU_005391_0_2_6"/>
<dbReference type="UniPathway" id="UPA00529">
    <property type="reaction ID" value="UER00386"/>
</dbReference>
<dbReference type="Proteomes" id="UP000008199">
    <property type="component" value="Chromosome"/>
</dbReference>
<dbReference type="GO" id="GO:0008802">
    <property type="term" value="F:betaine-aldehyde dehydrogenase (NAD+) activity"/>
    <property type="evidence" value="ECO:0007669"/>
    <property type="project" value="UniProtKB-UniRule"/>
</dbReference>
<dbReference type="GO" id="GO:0046872">
    <property type="term" value="F:metal ion binding"/>
    <property type="evidence" value="ECO:0007669"/>
    <property type="project" value="UniProtKB-KW"/>
</dbReference>
<dbReference type="GO" id="GO:0019285">
    <property type="term" value="P:glycine betaine biosynthetic process from choline"/>
    <property type="evidence" value="ECO:0007669"/>
    <property type="project" value="UniProtKB-UniRule"/>
</dbReference>
<dbReference type="CDD" id="cd07090">
    <property type="entry name" value="ALDH_F9_TMBADH"/>
    <property type="match status" value="1"/>
</dbReference>
<dbReference type="FunFam" id="3.40.309.10:FF:000014">
    <property type="entry name" value="NAD/NADP-dependent betaine aldehyde dehydrogenase"/>
    <property type="match status" value="1"/>
</dbReference>
<dbReference type="FunFam" id="3.40.605.10:FF:000007">
    <property type="entry name" value="NAD/NADP-dependent betaine aldehyde dehydrogenase"/>
    <property type="match status" value="1"/>
</dbReference>
<dbReference type="Gene3D" id="3.40.605.10">
    <property type="entry name" value="Aldehyde Dehydrogenase, Chain A, domain 1"/>
    <property type="match status" value="1"/>
</dbReference>
<dbReference type="Gene3D" id="3.40.309.10">
    <property type="entry name" value="Aldehyde Dehydrogenase, Chain A, domain 2"/>
    <property type="match status" value="1"/>
</dbReference>
<dbReference type="HAMAP" id="MF_00804">
    <property type="entry name" value="BADH"/>
    <property type="match status" value="1"/>
</dbReference>
<dbReference type="InterPro" id="IPR016161">
    <property type="entry name" value="Ald_DH/histidinol_DH"/>
</dbReference>
<dbReference type="InterPro" id="IPR016163">
    <property type="entry name" value="Ald_DH_C"/>
</dbReference>
<dbReference type="InterPro" id="IPR016160">
    <property type="entry name" value="Ald_DH_CS_CYS"/>
</dbReference>
<dbReference type="InterPro" id="IPR029510">
    <property type="entry name" value="Ald_DH_CS_GLU"/>
</dbReference>
<dbReference type="InterPro" id="IPR016162">
    <property type="entry name" value="Ald_DH_N"/>
</dbReference>
<dbReference type="InterPro" id="IPR015590">
    <property type="entry name" value="Aldehyde_DH_dom"/>
</dbReference>
<dbReference type="InterPro" id="IPR011264">
    <property type="entry name" value="BADH"/>
</dbReference>
<dbReference type="NCBIfam" id="TIGR01804">
    <property type="entry name" value="BADH"/>
    <property type="match status" value="1"/>
</dbReference>
<dbReference type="NCBIfam" id="NF009725">
    <property type="entry name" value="PRK13252.1"/>
    <property type="match status" value="1"/>
</dbReference>
<dbReference type="PANTHER" id="PTHR11699">
    <property type="entry name" value="ALDEHYDE DEHYDROGENASE-RELATED"/>
    <property type="match status" value="1"/>
</dbReference>
<dbReference type="Pfam" id="PF00171">
    <property type="entry name" value="Aldedh"/>
    <property type="match status" value="1"/>
</dbReference>
<dbReference type="SUPFAM" id="SSF53720">
    <property type="entry name" value="ALDH-like"/>
    <property type="match status" value="1"/>
</dbReference>
<dbReference type="PROSITE" id="PS00070">
    <property type="entry name" value="ALDEHYDE_DEHYDR_CYS"/>
    <property type="match status" value="1"/>
</dbReference>
<dbReference type="PROSITE" id="PS00687">
    <property type="entry name" value="ALDEHYDE_DEHYDR_GLU"/>
    <property type="match status" value="1"/>
</dbReference>